<evidence type="ECO:0000305" key="1"/>
<name>VAN1_CANAX</name>
<accession>Q00314</accession>
<sequence length="442" mass="50730">MFLLVTYTIYSRVLTGDSRIPQSQDRQQSPTNDNNHEVYKVTKDGVYKQEVTGVVEEVEEEELKEVTTEDLYKSNVDIFDLNDYQGSQEGAKNGDILLFLMPLRNAEHVLPMAFYNLMNLTYDHRLIDIAFLVSDCSPDDTTLETVFEYSVALQNGTLVDKLKHEEELKNSGNVRGTSDLYQSYMEPSYIESVKKAYSNPESHHPNYRTPFRSVTIFKKDFGQVIGQGFSDRHAVKVQGIRRKLMGRARNWLTSAALKPYHSWVYWRDADIETCPGDVIEELMSHNYDVMVPNVWRPLPTFLGNEQPYDLNSWVESDAGLELAKTLNEDDVIVEGYAEYPTWRAHLAYIRDANGDPREVIDLDGVGGVSILARAKIFRQGVHFPAFTFLNHAETEAFGKMAKKMGFSVGGLPHYTIWHIYEPSEDDLKEIARLERKKRRQKS</sequence>
<proteinExistence type="inferred from homology"/>
<feature type="chain" id="PRO_0000193671" description="Vanadate resistance protein">
    <location>
        <begin position="1"/>
        <end position="442"/>
    </location>
</feature>
<comment type="similarity">
    <text evidence="1">Belongs to the ANP1/MMN9/VAN1 family.</text>
</comment>
<reference key="1">
    <citation type="submission" date="1996-08" db="EMBL/GenBank/DDBJ databases">
        <title>Isolation and analysis of the Candida albicans VAN1 gene.</title>
        <authorList>
            <person name="Southard S.B."/>
            <person name="Chen-Wu J.L.-P."/>
            <person name="Robbins P.W."/>
        </authorList>
    </citation>
    <scope>NUCLEOTIDE SEQUENCE [GENOMIC DNA]</scope>
    <source>
        <strain>ATCC 10261 / CBS 2718 / NBRC 1061 / FMJ 1011</strain>
    </source>
</reference>
<organism>
    <name type="scientific">Candida albicans</name>
    <name type="common">Yeast</name>
    <dbReference type="NCBI Taxonomy" id="5476"/>
    <lineage>
        <taxon>Eukaryota</taxon>
        <taxon>Fungi</taxon>
        <taxon>Dikarya</taxon>
        <taxon>Ascomycota</taxon>
        <taxon>Saccharomycotina</taxon>
        <taxon>Pichiomycetes</taxon>
        <taxon>Debaryomycetaceae</taxon>
        <taxon>Candida/Lodderomyces clade</taxon>
        <taxon>Candida</taxon>
    </lineage>
</organism>
<protein>
    <recommendedName>
        <fullName>Vanadate resistance protein</fullName>
    </recommendedName>
</protein>
<dbReference type="EMBL" id="U63297">
    <property type="protein sequence ID" value="AAB05921.1"/>
    <property type="molecule type" value="Genomic_DNA"/>
</dbReference>
<dbReference type="SMR" id="Q00314"/>
<dbReference type="CAZy" id="GT62">
    <property type="family name" value="Glycosyltransferase Family 62"/>
</dbReference>
<dbReference type="EnsemblFungi" id="C3_07500W_A-T">
    <property type="protein sequence ID" value="C3_07500W_A-T-p1"/>
    <property type="gene ID" value="C3_07500W_A"/>
</dbReference>
<dbReference type="VEuPathDB" id="FungiDB:C3_07500W_A"/>
<dbReference type="VEuPathDB" id="FungiDB:CAWG_05941"/>
<dbReference type="GO" id="GO:0000136">
    <property type="term" value="C:mannan polymerase complex"/>
    <property type="evidence" value="ECO:0007669"/>
    <property type="project" value="EnsemblFungi"/>
</dbReference>
<dbReference type="GO" id="GO:0000009">
    <property type="term" value="F:alpha-1,6-mannosyltransferase activity"/>
    <property type="evidence" value="ECO:0007669"/>
    <property type="project" value="EnsemblFungi"/>
</dbReference>
<dbReference type="GO" id="GO:0000032">
    <property type="term" value="P:cell wall mannoprotein biosynthetic process"/>
    <property type="evidence" value="ECO:0007669"/>
    <property type="project" value="EnsemblFungi"/>
</dbReference>
<dbReference type="GO" id="GO:0030182">
    <property type="term" value="P:neuron differentiation"/>
    <property type="evidence" value="ECO:0000314"/>
    <property type="project" value="MGI"/>
</dbReference>
<dbReference type="GO" id="GO:0006487">
    <property type="term" value="P:protein N-linked glycosylation"/>
    <property type="evidence" value="ECO:0007669"/>
    <property type="project" value="EnsemblFungi"/>
</dbReference>
<dbReference type="FunFam" id="3.90.550.10:FF:000163">
    <property type="entry name" value="Van1p"/>
    <property type="match status" value="1"/>
</dbReference>
<dbReference type="Gene3D" id="3.90.550.10">
    <property type="entry name" value="Spore Coat Polysaccharide Biosynthesis Protein SpsA, Chain A"/>
    <property type="match status" value="2"/>
</dbReference>
<dbReference type="InterPro" id="IPR052086">
    <property type="entry name" value="Mannan_Polymerase_Subunit"/>
</dbReference>
<dbReference type="InterPro" id="IPR029044">
    <property type="entry name" value="Nucleotide-diphossugar_trans"/>
</dbReference>
<dbReference type="PANTHER" id="PTHR43083:SF5">
    <property type="entry name" value="MANNAN POLYMERASE I COMPLEX VAN1 SUBUNIT"/>
    <property type="match status" value="1"/>
</dbReference>
<dbReference type="PANTHER" id="PTHR43083">
    <property type="entry name" value="MANNAN POLYMERASE II"/>
    <property type="match status" value="1"/>
</dbReference>
<dbReference type="Pfam" id="PF03452">
    <property type="entry name" value="Anp1"/>
    <property type="match status" value="1"/>
</dbReference>
<dbReference type="SUPFAM" id="SSF53448">
    <property type="entry name" value="Nucleotide-diphospho-sugar transferases"/>
    <property type="match status" value="1"/>
</dbReference>
<gene>
    <name type="primary">VAN1</name>
</gene>